<accession>A2S245</accession>
<sequence length="150" mass="16245">MQIILLEKVANLGNLGDIVKVKDGYARNFLIPNRKARRATKDAIAEFEVRRAELEKVAAEKLAAAQAVGEKLNGQTFEITQKSGVDGRLFGSVTNGDVAELLKKAGYEIEKAQVRMPEGPLKMIGEHGVQVALHTDVVVDVTVNVIGDHA</sequence>
<organism>
    <name type="scientific">Burkholderia mallei (strain NCTC 10229)</name>
    <dbReference type="NCBI Taxonomy" id="412022"/>
    <lineage>
        <taxon>Bacteria</taxon>
        <taxon>Pseudomonadati</taxon>
        <taxon>Pseudomonadota</taxon>
        <taxon>Betaproteobacteria</taxon>
        <taxon>Burkholderiales</taxon>
        <taxon>Burkholderiaceae</taxon>
        <taxon>Burkholderia</taxon>
        <taxon>pseudomallei group</taxon>
    </lineage>
</organism>
<comment type="function">
    <text evidence="1">Binds to the 23S rRNA.</text>
</comment>
<comment type="similarity">
    <text evidence="1">Belongs to the bacterial ribosomal protein bL9 family.</text>
</comment>
<reference key="1">
    <citation type="journal article" date="2010" name="Genome Biol. Evol.">
        <title>Continuing evolution of Burkholderia mallei through genome reduction and large-scale rearrangements.</title>
        <authorList>
            <person name="Losada L."/>
            <person name="Ronning C.M."/>
            <person name="DeShazer D."/>
            <person name="Woods D."/>
            <person name="Fedorova N."/>
            <person name="Kim H.S."/>
            <person name="Shabalina S.A."/>
            <person name="Pearson T.R."/>
            <person name="Brinkac L."/>
            <person name="Tan P."/>
            <person name="Nandi T."/>
            <person name="Crabtree J."/>
            <person name="Badger J."/>
            <person name="Beckstrom-Sternberg S."/>
            <person name="Saqib M."/>
            <person name="Schutzer S.E."/>
            <person name="Keim P."/>
            <person name="Nierman W.C."/>
        </authorList>
    </citation>
    <scope>NUCLEOTIDE SEQUENCE [LARGE SCALE GENOMIC DNA]</scope>
    <source>
        <strain>NCTC 10229</strain>
    </source>
</reference>
<gene>
    <name evidence="1" type="primary">rplI</name>
    <name type="ordered locus">BMA10229_A0005</name>
</gene>
<evidence type="ECO:0000255" key="1">
    <source>
        <dbReference type="HAMAP-Rule" id="MF_00503"/>
    </source>
</evidence>
<evidence type="ECO:0000305" key="2"/>
<proteinExistence type="inferred from homology"/>
<keyword id="KW-0687">Ribonucleoprotein</keyword>
<keyword id="KW-0689">Ribosomal protein</keyword>
<keyword id="KW-0694">RNA-binding</keyword>
<keyword id="KW-0699">rRNA-binding</keyword>
<dbReference type="EMBL" id="CP000546">
    <property type="protein sequence ID" value="ABN01902.1"/>
    <property type="molecule type" value="Genomic_DNA"/>
</dbReference>
<dbReference type="RefSeq" id="WP_004191711.1">
    <property type="nucleotide sequence ID" value="NC_008836.1"/>
</dbReference>
<dbReference type="SMR" id="A2S245"/>
<dbReference type="GeneID" id="93060530"/>
<dbReference type="KEGG" id="bml:BMA10229_A0005"/>
<dbReference type="HOGENOM" id="CLU_078938_4_1_4"/>
<dbReference type="Proteomes" id="UP000002283">
    <property type="component" value="Chromosome I"/>
</dbReference>
<dbReference type="GO" id="GO:1990904">
    <property type="term" value="C:ribonucleoprotein complex"/>
    <property type="evidence" value="ECO:0007669"/>
    <property type="project" value="UniProtKB-KW"/>
</dbReference>
<dbReference type="GO" id="GO:0005840">
    <property type="term" value="C:ribosome"/>
    <property type="evidence" value="ECO:0007669"/>
    <property type="project" value="UniProtKB-KW"/>
</dbReference>
<dbReference type="GO" id="GO:0019843">
    <property type="term" value="F:rRNA binding"/>
    <property type="evidence" value="ECO:0007669"/>
    <property type="project" value="UniProtKB-UniRule"/>
</dbReference>
<dbReference type="GO" id="GO:0003735">
    <property type="term" value="F:structural constituent of ribosome"/>
    <property type="evidence" value="ECO:0007669"/>
    <property type="project" value="InterPro"/>
</dbReference>
<dbReference type="GO" id="GO:0006412">
    <property type="term" value="P:translation"/>
    <property type="evidence" value="ECO:0007669"/>
    <property type="project" value="UniProtKB-UniRule"/>
</dbReference>
<dbReference type="Gene3D" id="3.10.430.100">
    <property type="entry name" value="Ribosomal protein L9, C-terminal domain"/>
    <property type="match status" value="1"/>
</dbReference>
<dbReference type="Gene3D" id="3.40.5.10">
    <property type="entry name" value="Ribosomal protein L9, N-terminal domain"/>
    <property type="match status" value="1"/>
</dbReference>
<dbReference type="HAMAP" id="MF_00503">
    <property type="entry name" value="Ribosomal_bL9"/>
    <property type="match status" value="1"/>
</dbReference>
<dbReference type="InterPro" id="IPR000244">
    <property type="entry name" value="Ribosomal_bL9"/>
</dbReference>
<dbReference type="InterPro" id="IPR009027">
    <property type="entry name" value="Ribosomal_bL9/RNase_H1_N"/>
</dbReference>
<dbReference type="InterPro" id="IPR020594">
    <property type="entry name" value="Ribosomal_bL9_bac/chp"/>
</dbReference>
<dbReference type="InterPro" id="IPR020069">
    <property type="entry name" value="Ribosomal_bL9_C"/>
</dbReference>
<dbReference type="InterPro" id="IPR036791">
    <property type="entry name" value="Ribosomal_bL9_C_sf"/>
</dbReference>
<dbReference type="InterPro" id="IPR020070">
    <property type="entry name" value="Ribosomal_bL9_N"/>
</dbReference>
<dbReference type="InterPro" id="IPR036935">
    <property type="entry name" value="Ribosomal_bL9_N_sf"/>
</dbReference>
<dbReference type="NCBIfam" id="TIGR00158">
    <property type="entry name" value="L9"/>
    <property type="match status" value="1"/>
</dbReference>
<dbReference type="PANTHER" id="PTHR21368">
    <property type="entry name" value="50S RIBOSOMAL PROTEIN L9"/>
    <property type="match status" value="1"/>
</dbReference>
<dbReference type="Pfam" id="PF03948">
    <property type="entry name" value="Ribosomal_L9_C"/>
    <property type="match status" value="1"/>
</dbReference>
<dbReference type="Pfam" id="PF01281">
    <property type="entry name" value="Ribosomal_L9_N"/>
    <property type="match status" value="1"/>
</dbReference>
<dbReference type="SUPFAM" id="SSF55658">
    <property type="entry name" value="L9 N-domain-like"/>
    <property type="match status" value="1"/>
</dbReference>
<dbReference type="SUPFAM" id="SSF55653">
    <property type="entry name" value="Ribosomal protein L9 C-domain"/>
    <property type="match status" value="1"/>
</dbReference>
<dbReference type="PROSITE" id="PS00651">
    <property type="entry name" value="RIBOSOMAL_L9"/>
    <property type="match status" value="1"/>
</dbReference>
<feature type="chain" id="PRO_1000014752" description="Large ribosomal subunit protein bL9">
    <location>
        <begin position="1"/>
        <end position="150"/>
    </location>
</feature>
<protein>
    <recommendedName>
        <fullName evidence="1">Large ribosomal subunit protein bL9</fullName>
    </recommendedName>
    <alternativeName>
        <fullName evidence="2">50S ribosomal protein L9</fullName>
    </alternativeName>
</protein>
<name>RL9_BURM9</name>